<dbReference type="EC" id="2.3.1.-"/>
<dbReference type="EMBL" id="AY653733">
    <property type="protein sequence ID" value="AAV50847.1"/>
    <property type="molecule type" value="Genomic_DNA"/>
</dbReference>
<dbReference type="SMR" id="Q5UR52"/>
<dbReference type="KEGG" id="vg:9925220"/>
<dbReference type="OrthoDB" id="13997at10239"/>
<dbReference type="Proteomes" id="UP000001134">
    <property type="component" value="Genome"/>
</dbReference>
<dbReference type="GO" id="GO:0044423">
    <property type="term" value="C:virion component"/>
    <property type="evidence" value="ECO:0007669"/>
    <property type="project" value="UniProtKB-KW"/>
</dbReference>
<dbReference type="GO" id="GO:0016747">
    <property type="term" value="F:acyltransferase activity, transferring groups other than amino-acyl groups"/>
    <property type="evidence" value="ECO:0007669"/>
    <property type="project" value="InterPro"/>
</dbReference>
<dbReference type="Gene3D" id="3.40.630.30">
    <property type="match status" value="1"/>
</dbReference>
<dbReference type="InterPro" id="IPR016181">
    <property type="entry name" value="Acyl_CoA_acyltransferase"/>
</dbReference>
<dbReference type="InterPro" id="IPR000182">
    <property type="entry name" value="GNAT_dom"/>
</dbReference>
<dbReference type="Pfam" id="PF13420">
    <property type="entry name" value="Acetyltransf_4"/>
    <property type="match status" value="1"/>
</dbReference>
<dbReference type="SUPFAM" id="SSF55729">
    <property type="entry name" value="Acyl-CoA N-acyltransferases (Nat)"/>
    <property type="match status" value="1"/>
</dbReference>
<dbReference type="PROSITE" id="PS51186">
    <property type="entry name" value="GNAT"/>
    <property type="match status" value="1"/>
</dbReference>
<organismHost>
    <name type="scientific">Acanthamoeba polyphaga</name>
    <name type="common">Amoeba</name>
    <dbReference type="NCBI Taxonomy" id="5757"/>
</organismHost>
<gene>
    <name type="ordered locus">MIMI_R584</name>
</gene>
<proteinExistence type="evidence at protein level"/>
<accession>Q5UR52</accession>
<feature type="chain" id="PRO_0000244025" description="Uncharacterized N-acetyltransferase R584">
    <location>
        <begin position="1"/>
        <end position="407"/>
    </location>
</feature>
<feature type="domain" description="N-acetyltransferase" evidence="1">
    <location>
        <begin position="271"/>
        <end position="407"/>
    </location>
</feature>
<feature type="region of interest" description="Disordered" evidence="2">
    <location>
        <begin position="145"/>
        <end position="231"/>
    </location>
</feature>
<feature type="compositionally biased region" description="Basic residues" evidence="2">
    <location>
        <begin position="158"/>
        <end position="175"/>
    </location>
</feature>
<feature type="compositionally biased region" description="Low complexity" evidence="2">
    <location>
        <begin position="176"/>
        <end position="196"/>
    </location>
</feature>
<keyword id="KW-0012">Acyltransferase</keyword>
<keyword id="KW-1185">Reference proteome</keyword>
<keyword id="KW-0808">Transferase</keyword>
<keyword id="KW-0946">Virion</keyword>
<reference key="1">
    <citation type="journal article" date="2004" name="Science">
        <title>The 1.2-megabase genome sequence of Mimivirus.</title>
        <authorList>
            <person name="Raoult D."/>
            <person name="Audic S."/>
            <person name="Robert C."/>
            <person name="Abergel C."/>
            <person name="Renesto P."/>
            <person name="Ogata H."/>
            <person name="La Scola B."/>
            <person name="Susan M."/>
            <person name="Claverie J.-M."/>
        </authorList>
    </citation>
    <scope>NUCLEOTIDE SEQUENCE [LARGE SCALE GENOMIC DNA]</scope>
    <source>
        <strain>Rowbotham-Bradford</strain>
    </source>
</reference>
<reference key="2">
    <citation type="journal article" date="2006" name="J. Virol.">
        <title>Mimivirus giant particles incorporate a large fraction of anonymous and unique gene products.</title>
        <authorList>
            <person name="Renesto P."/>
            <person name="Abergel C."/>
            <person name="Decloquement P."/>
            <person name="Moinier D."/>
            <person name="Azza S."/>
            <person name="Ogata H."/>
            <person name="Fourquet P."/>
            <person name="Gorvel J.-P."/>
            <person name="Claverie J.-M."/>
            <person name="Raoult D."/>
        </authorList>
    </citation>
    <scope>IDENTIFICATION BY MASS SPECTROMETRY [LARGE SCALE ANALYSIS]</scope>
    <scope>SUBCELLULAR LOCATION</scope>
</reference>
<organism>
    <name type="scientific">Acanthamoeba polyphaga mimivirus</name>
    <name type="common">APMV</name>
    <dbReference type="NCBI Taxonomy" id="212035"/>
    <lineage>
        <taxon>Viruses</taxon>
        <taxon>Varidnaviria</taxon>
        <taxon>Bamfordvirae</taxon>
        <taxon>Nucleocytoviricota</taxon>
        <taxon>Megaviricetes</taxon>
        <taxon>Imitervirales</taxon>
        <taxon>Mimiviridae</taxon>
        <taxon>Megamimivirinae</taxon>
        <taxon>Mimivirus</taxon>
        <taxon>Mimivirus bradfordmassiliense</taxon>
    </lineage>
</organism>
<evidence type="ECO:0000255" key="1">
    <source>
        <dbReference type="PROSITE-ProRule" id="PRU00532"/>
    </source>
</evidence>
<evidence type="ECO:0000256" key="2">
    <source>
        <dbReference type="SAM" id="MobiDB-lite"/>
    </source>
</evidence>
<evidence type="ECO:0000269" key="3">
    <source>
    </source>
</evidence>
<protein>
    <recommendedName>
        <fullName>Uncharacterized N-acetyltransferase R584</fullName>
        <ecNumber>2.3.1.-</ecNumber>
    </recommendedName>
</protein>
<sequence length="407" mass="46994">MPKSSSNNPCPPGEILREGYYRHGYERRGFKRSSGTYIPPTEVSEAYVPPTCIIDRGKPGKGPRILPKPGNDLHLSWYGYAVHEPERDRHRALVEASQENDPLEVLRRLNLLRNYQAYPDVKDIMSQDVKFMSDFYAKYKERNQEANRFGRSNSRSRSNSRSKSSRSRSNNRSKSSRSSSTQSKSNNRSNSRSNSKTSRRLKKLPENDLDLDQDGGNRYGGDPLTSITSDTTGNQILETNIKLSKETECSEGKCQVFNKVYESHTINGKKIVFETLDQNDSENVLSLDKLYLDSDQTIDRVRQNLSTNKGYIIGIKSDNKLEGYCWYKEISNNEVKIFWFCANKGYGTALYTFMEKYFKLNNYSRIVIDVSMEGSYAVRRINFWNHQGFKTYQVKTDNHKIHMEKDI</sequence>
<name>YR584_MIMIV</name>
<comment type="subcellular location">
    <subcellularLocation>
        <location evidence="3">Virion</location>
    </subcellularLocation>
</comment>